<gene>
    <name type="ordered locus">RC0807</name>
</gene>
<proteinExistence type="inferred from homology"/>
<protein>
    <recommendedName>
        <fullName>Uncharacterized RNA pseudouridine synthase RC0807</fullName>
        <ecNumber>5.4.99.-</ecNumber>
    </recommendedName>
    <alternativeName>
        <fullName>RNA pseudouridylate synthase</fullName>
    </alternativeName>
    <alternativeName>
        <fullName>RNA-uridine isomerase</fullName>
    </alternativeName>
</protein>
<organism>
    <name type="scientific">Rickettsia conorii (strain ATCC VR-613 / Malish 7)</name>
    <dbReference type="NCBI Taxonomy" id="272944"/>
    <lineage>
        <taxon>Bacteria</taxon>
        <taxon>Pseudomonadati</taxon>
        <taxon>Pseudomonadota</taxon>
        <taxon>Alphaproteobacteria</taxon>
        <taxon>Rickettsiales</taxon>
        <taxon>Rickettsiaceae</taxon>
        <taxon>Rickettsieae</taxon>
        <taxon>Rickettsia</taxon>
        <taxon>spotted fever group</taxon>
    </lineage>
</organism>
<reference key="1">
    <citation type="journal article" date="2001" name="Science">
        <title>Mechanisms of evolution in Rickettsia conorii and R. prowazekii.</title>
        <authorList>
            <person name="Ogata H."/>
            <person name="Audic S."/>
            <person name="Renesto-Audiffren P."/>
            <person name="Fournier P.-E."/>
            <person name="Barbe V."/>
            <person name="Samson D."/>
            <person name="Roux V."/>
            <person name="Cossart P."/>
            <person name="Weissenbach J."/>
            <person name="Claverie J.-M."/>
            <person name="Raoult D."/>
        </authorList>
    </citation>
    <scope>NUCLEOTIDE SEQUENCE [LARGE SCALE GENOMIC DNA]</scope>
    <source>
        <strain>ATCC VR-613 / Malish 7</strain>
    </source>
</reference>
<accession>Q92HG4</accession>
<keyword id="KW-0413">Isomerase</keyword>
<keyword id="KW-0694">RNA-binding</keyword>
<feature type="chain" id="PRO_0000100031" description="Uncharacterized RNA pseudouridine synthase RC0807">
    <location>
        <begin position="1"/>
        <end position="230"/>
    </location>
</feature>
<feature type="domain" description="S4 RNA-binding" evidence="2">
    <location>
        <begin position="2"/>
        <end position="69"/>
    </location>
</feature>
<feature type="active site" description="Nucleophile" evidence="1">
    <location>
        <position position="102"/>
    </location>
</feature>
<comment type="catalytic activity">
    <reaction>
        <text>a uridine in RNA = a pseudouridine in RNA</text>
        <dbReference type="Rhea" id="RHEA:48348"/>
        <dbReference type="Rhea" id="RHEA-COMP:12068"/>
        <dbReference type="Rhea" id="RHEA-COMP:12069"/>
        <dbReference type="ChEBI" id="CHEBI:65314"/>
        <dbReference type="ChEBI" id="CHEBI:65315"/>
    </reaction>
</comment>
<comment type="similarity">
    <text evidence="3">Belongs to the pseudouridine synthase RsuA family.</text>
</comment>
<dbReference type="EC" id="5.4.99.-"/>
<dbReference type="EMBL" id="AE006914">
    <property type="protein sequence ID" value="AAL03345.1"/>
    <property type="molecule type" value="Genomic_DNA"/>
</dbReference>
<dbReference type="PIR" id="G97800">
    <property type="entry name" value="G97800"/>
</dbReference>
<dbReference type="RefSeq" id="WP_010977418.1">
    <property type="nucleotide sequence ID" value="NC_003103.1"/>
</dbReference>
<dbReference type="SMR" id="Q92HG4"/>
<dbReference type="GeneID" id="927705"/>
<dbReference type="KEGG" id="rco:RC0807"/>
<dbReference type="PATRIC" id="fig|272944.4.peg.917"/>
<dbReference type="HOGENOM" id="CLU_024979_1_0_5"/>
<dbReference type="Proteomes" id="UP000000816">
    <property type="component" value="Chromosome"/>
</dbReference>
<dbReference type="GO" id="GO:0003723">
    <property type="term" value="F:RNA binding"/>
    <property type="evidence" value="ECO:0007669"/>
    <property type="project" value="UniProtKB-KW"/>
</dbReference>
<dbReference type="GO" id="GO:0120159">
    <property type="term" value="F:rRNA pseudouridine synthase activity"/>
    <property type="evidence" value="ECO:0007669"/>
    <property type="project" value="UniProtKB-ARBA"/>
</dbReference>
<dbReference type="GO" id="GO:0000455">
    <property type="term" value="P:enzyme-directed rRNA pseudouridine synthesis"/>
    <property type="evidence" value="ECO:0007669"/>
    <property type="project" value="UniProtKB-ARBA"/>
</dbReference>
<dbReference type="CDD" id="cd00165">
    <property type="entry name" value="S4"/>
    <property type="match status" value="1"/>
</dbReference>
<dbReference type="FunFam" id="3.10.290.10:FF:000003">
    <property type="entry name" value="Pseudouridine synthase"/>
    <property type="match status" value="1"/>
</dbReference>
<dbReference type="Gene3D" id="3.30.70.1560">
    <property type="entry name" value="Alpha-L RNA-binding motif"/>
    <property type="match status" value="1"/>
</dbReference>
<dbReference type="Gene3D" id="3.30.70.580">
    <property type="entry name" value="Pseudouridine synthase I, catalytic domain, N-terminal subdomain"/>
    <property type="match status" value="1"/>
</dbReference>
<dbReference type="Gene3D" id="3.10.290.10">
    <property type="entry name" value="RNA-binding S4 domain"/>
    <property type="match status" value="1"/>
</dbReference>
<dbReference type="InterPro" id="IPR042092">
    <property type="entry name" value="PsdUridine_s_RsuA/RluB/E/F_cat"/>
</dbReference>
<dbReference type="InterPro" id="IPR020103">
    <property type="entry name" value="PsdUridine_synth_cat_dom_sf"/>
</dbReference>
<dbReference type="InterPro" id="IPR006145">
    <property type="entry name" value="PsdUridine_synth_RsuA/RluA"/>
</dbReference>
<dbReference type="InterPro" id="IPR000748">
    <property type="entry name" value="PsdUridine_synth_RsuA/RluB/E/F"/>
</dbReference>
<dbReference type="InterPro" id="IPR018496">
    <property type="entry name" value="PsdUridine_synth_RsuA/RluB_CS"/>
</dbReference>
<dbReference type="InterPro" id="IPR050343">
    <property type="entry name" value="RsuA_PseudoU_synthase"/>
</dbReference>
<dbReference type="InterPro" id="IPR002942">
    <property type="entry name" value="S4_RNA-bd"/>
</dbReference>
<dbReference type="InterPro" id="IPR036986">
    <property type="entry name" value="S4_RNA-bd_sf"/>
</dbReference>
<dbReference type="InterPro" id="IPR020094">
    <property type="entry name" value="TruA/RsuA/RluB/E/F_N"/>
</dbReference>
<dbReference type="NCBIfam" id="TIGR00093">
    <property type="entry name" value="pseudouridine synthase"/>
    <property type="match status" value="1"/>
</dbReference>
<dbReference type="PANTHER" id="PTHR47683">
    <property type="entry name" value="PSEUDOURIDINE SYNTHASE FAMILY PROTEIN-RELATED"/>
    <property type="match status" value="1"/>
</dbReference>
<dbReference type="PANTHER" id="PTHR47683:SF3">
    <property type="entry name" value="RIBOSOMAL LARGE SUBUNIT PSEUDOURIDINE SYNTHASE B"/>
    <property type="match status" value="1"/>
</dbReference>
<dbReference type="Pfam" id="PF00849">
    <property type="entry name" value="PseudoU_synth_2"/>
    <property type="match status" value="1"/>
</dbReference>
<dbReference type="Pfam" id="PF01479">
    <property type="entry name" value="S4"/>
    <property type="match status" value="1"/>
</dbReference>
<dbReference type="SMART" id="SM00363">
    <property type="entry name" value="S4"/>
    <property type="match status" value="1"/>
</dbReference>
<dbReference type="SUPFAM" id="SSF55174">
    <property type="entry name" value="Alpha-L RNA-binding motif"/>
    <property type="match status" value="1"/>
</dbReference>
<dbReference type="SUPFAM" id="SSF55120">
    <property type="entry name" value="Pseudouridine synthase"/>
    <property type="match status" value="1"/>
</dbReference>
<dbReference type="PROSITE" id="PS01149">
    <property type="entry name" value="PSI_RSU"/>
    <property type="match status" value="1"/>
</dbReference>
<dbReference type="PROSITE" id="PS50889">
    <property type="entry name" value="S4"/>
    <property type="match status" value="1"/>
</dbReference>
<name>Y807_RICCN</name>
<evidence type="ECO:0000250" key="1"/>
<evidence type="ECO:0000255" key="2">
    <source>
        <dbReference type="PROSITE-ProRule" id="PRU00182"/>
    </source>
</evidence>
<evidence type="ECO:0000305" key="3"/>
<sequence>MHRLAKIISNAGVCSRRDAEKLIVAGQVKVDGITILSPTTNVDISNQIEVSGTLINNIHKPRLWIYYKPVGLITTHKDPLSRKTVFEQLTGLPRVISIGRLDLNSEGLLLLTNSGDLARQFELPSSRLKRVYHVRAYGKSDILLKSNYKNLEIDGIFYNPHSIKLLKQNKTNCWFEVVLFEGKNREIRRIFEYCGLKVNKLIRIQYGSFTIDNLKPGDYKEINNKILENN</sequence>